<dbReference type="EC" id="1.17.4.2"/>
<dbReference type="EMBL" id="AAFI02000194">
    <property type="protein sequence ID" value="EAL61130.1"/>
    <property type="molecule type" value="Genomic_DNA"/>
</dbReference>
<dbReference type="SMR" id="Q54CW7"/>
<dbReference type="FunCoup" id="Q54CW7">
    <property type="interactions" value="42"/>
</dbReference>
<dbReference type="STRING" id="44689.Q54CW7"/>
<dbReference type="GlyGen" id="Q54CW7">
    <property type="glycosylation" value="2 sites"/>
</dbReference>
<dbReference type="PaxDb" id="44689-DDB0233056"/>
<dbReference type="EnsemblProtists" id="EAL61130">
    <property type="protein sequence ID" value="EAL61130"/>
    <property type="gene ID" value="DDB_G0292654"/>
</dbReference>
<dbReference type="KEGG" id="ddi:DDB_G0292654"/>
<dbReference type="dictyBase" id="DDB_G0292654">
    <property type="gene designation" value="ndrJ"/>
</dbReference>
<dbReference type="VEuPathDB" id="AmoebaDB:DDB_G0292654"/>
<dbReference type="eggNOG" id="ENOG502QRRC">
    <property type="taxonomic scope" value="Eukaryota"/>
</dbReference>
<dbReference type="HOGENOM" id="CLU_002384_0_0_1"/>
<dbReference type="InParanoid" id="Q54CW7"/>
<dbReference type="OMA" id="FHCNLAE"/>
<dbReference type="PRO" id="PR:Q54CW7"/>
<dbReference type="Proteomes" id="UP000002195">
    <property type="component" value="Chromosome 6"/>
</dbReference>
<dbReference type="GO" id="GO:0031419">
    <property type="term" value="F:cobalamin binding"/>
    <property type="evidence" value="ECO:0007669"/>
    <property type="project" value="UniProtKB-KW"/>
</dbReference>
<dbReference type="GO" id="GO:0000166">
    <property type="term" value="F:nucleotide binding"/>
    <property type="evidence" value="ECO:0007669"/>
    <property type="project" value="InterPro"/>
</dbReference>
<dbReference type="GO" id="GO:0004748">
    <property type="term" value="F:ribonucleoside-diphosphate reductase activity, thioredoxin disulfide as acceptor"/>
    <property type="evidence" value="ECO:0000250"/>
    <property type="project" value="dictyBase"/>
</dbReference>
<dbReference type="GO" id="GO:0008998">
    <property type="term" value="F:ribonucleoside-triphosphate reductase (thioredoxin) activity"/>
    <property type="evidence" value="ECO:0007669"/>
    <property type="project" value="UniProtKB-EC"/>
</dbReference>
<dbReference type="GO" id="GO:0006260">
    <property type="term" value="P:DNA replication"/>
    <property type="evidence" value="ECO:0007669"/>
    <property type="project" value="UniProtKB-KW"/>
</dbReference>
<dbReference type="GO" id="GO:0009142">
    <property type="term" value="P:nucleoside triphosphate biosynthetic process"/>
    <property type="evidence" value="ECO:0000250"/>
    <property type="project" value="dictyBase"/>
</dbReference>
<dbReference type="CDD" id="cd01676">
    <property type="entry name" value="RNR_II_monomer"/>
    <property type="match status" value="1"/>
</dbReference>
<dbReference type="FunFam" id="3.30.1620.10:FF:000001">
    <property type="entry name" value="Ribonucleoside-triphosphate reductase, adenosylcobalamin-dependent"/>
    <property type="match status" value="1"/>
</dbReference>
<dbReference type="FunFam" id="3.20.70.20:FF:000039">
    <property type="entry name" value="Uncharacterized protein"/>
    <property type="match status" value="1"/>
</dbReference>
<dbReference type="Gene3D" id="3.20.70.20">
    <property type="match status" value="1"/>
</dbReference>
<dbReference type="Gene3D" id="3.30.1620.10">
    <property type="entry name" value="b-12 dependent (class ii) ribonucleotide reductase, Chain A, Domain 2"/>
    <property type="match status" value="1"/>
</dbReference>
<dbReference type="Gene3D" id="3.90.1390.10">
    <property type="entry name" value="b-12 dependent (class ii) ribonucleotide reductase, chain A, domain 3"/>
    <property type="match status" value="1"/>
</dbReference>
<dbReference type="InterPro" id="IPR050862">
    <property type="entry name" value="RdRp_reductase_class-2"/>
</dbReference>
<dbReference type="InterPro" id="IPR054158">
    <property type="entry name" value="RNR-II_ins_dom"/>
</dbReference>
<dbReference type="InterPro" id="IPR040763">
    <property type="entry name" value="RNR_alpha_hel"/>
</dbReference>
<dbReference type="InterPro" id="IPR013345">
    <property type="entry name" value="RTP_Rdtase_AdoCbl-dep"/>
</dbReference>
<dbReference type="NCBIfam" id="TIGR02505">
    <property type="entry name" value="RTPR"/>
    <property type="match status" value="1"/>
</dbReference>
<dbReference type="PANTHER" id="PTHR43371:SF1">
    <property type="entry name" value="RIBONUCLEOSIDE-DIPHOSPHATE REDUCTASE"/>
    <property type="match status" value="1"/>
</dbReference>
<dbReference type="PANTHER" id="PTHR43371">
    <property type="entry name" value="VITAMIN B12-DEPENDENT RIBONUCLEOTIDE REDUCTASE"/>
    <property type="match status" value="1"/>
</dbReference>
<dbReference type="Pfam" id="PF21995">
    <property type="entry name" value="RNR-II_ins_dom"/>
    <property type="match status" value="1"/>
</dbReference>
<dbReference type="Pfam" id="PF17975">
    <property type="entry name" value="RNR_Alpha"/>
    <property type="match status" value="1"/>
</dbReference>
<dbReference type="SUPFAM" id="SSF51998">
    <property type="entry name" value="PFL-like glycyl radical enzymes"/>
    <property type="match status" value="1"/>
</dbReference>
<comment type="catalytic activity">
    <reaction>
        <text>a 2'-deoxyribonucleoside 5'-triphosphate + [thioredoxin]-disulfide + H2O = a ribonucleoside 5'-triphosphate + [thioredoxin]-dithiol</text>
        <dbReference type="Rhea" id="RHEA:12701"/>
        <dbReference type="Rhea" id="RHEA-COMP:10698"/>
        <dbReference type="Rhea" id="RHEA-COMP:10700"/>
        <dbReference type="ChEBI" id="CHEBI:15377"/>
        <dbReference type="ChEBI" id="CHEBI:29950"/>
        <dbReference type="ChEBI" id="CHEBI:50058"/>
        <dbReference type="ChEBI" id="CHEBI:61557"/>
        <dbReference type="ChEBI" id="CHEBI:61560"/>
        <dbReference type="EC" id="1.17.4.2"/>
    </reaction>
</comment>
<comment type="cofactor">
    <cofactor evidence="1">
        <name>adenosylcob(III)alamin</name>
        <dbReference type="ChEBI" id="CHEBI:18408"/>
    </cofactor>
</comment>
<comment type="subunit">
    <text evidence="1">Monomer.</text>
</comment>
<comment type="similarity">
    <text evidence="3">Belongs to the class II ribonucleoside-triphosphate reductase family.</text>
</comment>
<sequence length="758" mass="86008">MLTIKRLLLNQNLFKSSCNSTGIISINYNSNNKICFFSSSSTLINKTNEILDIEDNNNNNNEISSSPLFLKETIKEFKLKKEFIEKYSKKKAPFGFGVLGEIVYRRSYSRVKEDNTNEQWFETVERVVNGTYNIQRKWIERHGLEWNQNKAQKSAQEMYNRIFEMKFLPPGRGLYSCGSSTTESKGLFAALNNCAFVSTLDIKKNPSKPFIFLMDASMLGVGVGFDTKGENSIIIKGQLPPPPPQQQPQQQQQQHGQNNNIFIVPDSREGWVESVQLLLDSYFLKRNNPIFDYSSIRKKGEPIKGFGGVCCGYEPLKELHDEIRALLNKCIGKPISSTNIVDLMNLIGKCVVSGNVRQAAEIAFGDPNSQEYIDLKNYQINPQRASFGWCSNNSVFAELGMDYSKVCQSILHNGEPGLAWLDNMKAYSRMVPTELDYKDRRAMGGNPCLEQTLESYELCCLVETFPNNHESLEDYLKTLKYAFLYAKTVTLGSTQWPDTNKVLLRNRRIGCSMSGIAQFIHFNGLHQLKDWCVNGFKLLNELDEKYSEWLAIPKSIKRTSIKPSGTVSLLAGATPGMHYPISEYYIRRIRIQKESNLIPPLVEAGYHVEPAFENSTNVVVEIPIHSGKGIRSANSITMWEQLSLASFLQKYWADNQVSCTVSFDPIKEGPQLKHALDYFQYQLKGVSFLPNSSTTTSVYKQMPYEEIDETRYNQIIANLKPVDFQKLNNSPLEPTPDKFCDSSSCTIVSDNSETLNNL</sequence>
<gene>
    <name type="primary">rtpR</name>
    <name type="ORF">DDB_G0292654</name>
</gene>
<accession>Q54CW7</accession>
<protein>
    <recommendedName>
        <fullName>Probable adenosylcobalamin-dependent ribonucleoside-triphosphate reductase</fullName>
        <shortName>RTPR</shortName>
        <ecNumber>1.17.4.2</ecNumber>
    </recommendedName>
</protein>
<proteinExistence type="inferred from homology"/>
<keyword id="KW-0846">Cobalamin</keyword>
<keyword id="KW-0170">Cobalt</keyword>
<keyword id="KW-1015">Disulfide bond</keyword>
<keyword id="KW-0235">DNA replication</keyword>
<keyword id="KW-0560">Oxidoreductase</keyword>
<keyword id="KW-0676">Redox-active center</keyword>
<keyword id="KW-1185">Reference proteome</keyword>
<evidence type="ECO:0000250" key="1"/>
<evidence type="ECO:0000256" key="2">
    <source>
        <dbReference type="SAM" id="MobiDB-lite"/>
    </source>
</evidence>
<evidence type="ECO:0000305" key="3"/>
<name>RTPR_DICDI</name>
<reference key="1">
    <citation type="journal article" date="2005" name="Nature">
        <title>The genome of the social amoeba Dictyostelium discoideum.</title>
        <authorList>
            <person name="Eichinger L."/>
            <person name="Pachebat J.A."/>
            <person name="Gloeckner G."/>
            <person name="Rajandream M.A."/>
            <person name="Sucgang R."/>
            <person name="Berriman M."/>
            <person name="Song J."/>
            <person name="Olsen R."/>
            <person name="Szafranski K."/>
            <person name="Xu Q."/>
            <person name="Tunggal B."/>
            <person name="Kummerfeld S."/>
            <person name="Madera M."/>
            <person name="Konfortov B.A."/>
            <person name="Rivero F."/>
            <person name="Bankier A.T."/>
            <person name="Lehmann R."/>
            <person name="Hamlin N."/>
            <person name="Davies R."/>
            <person name="Gaudet P."/>
            <person name="Fey P."/>
            <person name="Pilcher K."/>
            <person name="Chen G."/>
            <person name="Saunders D."/>
            <person name="Sodergren E.J."/>
            <person name="Davis P."/>
            <person name="Kerhornou A."/>
            <person name="Nie X."/>
            <person name="Hall N."/>
            <person name="Anjard C."/>
            <person name="Hemphill L."/>
            <person name="Bason N."/>
            <person name="Farbrother P."/>
            <person name="Desany B."/>
            <person name="Just E."/>
            <person name="Morio T."/>
            <person name="Rost R."/>
            <person name="Churcher C.M."/>
            <person name="Cooper J."/>
            <person name="Haydock S."/>
            <person name="van Driessche N."/>
            <person name="Cronin A."/>
            <person name="Goodhead I."/>
            <person name="Muzny D.M."/>
            <person name="Mourier T."/>
            <person name="Pain A."/>
            <person name="Lu M."/>
            <person name="Harper D."/>
            <person name="Lindsay R."/>
            <person name="Hauser H."/>
            <person name="James K.D."/>
            <person name="Quiles M."/>
            <person name="Madan Babu M."/>
            <person name="Saito T."/>
            <person name="Buchrieser C."/>
            <person name="Wardroper A."/>
            <person name="Felder M."/>
            <person name="Thangavelu M."/>
            <person name="Johnson D."/>
            <person name="Knights A."/>
            <person name="Loulseged H."/>
            <person name="Mungall K.L."/>
            <person name="Oliver K."/>
            <person name="Price C."/>
            <person name="Quail M.A."/>
            <person name="Urushihara H."/>
            <person name="Hernandez J."/>
            <person name="Rabbinowitsch E."/>
            <person name="Steffen D."/>
            <person name="Sanders M."/>
            <person name="Ma J."/>
            <person name="Kohara Y."/>
            <person name="Sharp S."/>
            <person name="Simmonds M.N."/>
            <person name="Spiegler S."/>
            <person name="Tivey A."/>
            <person name="Sugano S."/>
            <person name="White B."/>
            <person name="Walker D."/>
            <person name="Woodward J.R."/>
            <person name="Winckler T."/>
            <person name="Tanaka Y."/>
            <person name="Shaulsky G."/>
            <person name="Schleicher M."/>
            <person name="Weinstock G.M."/>
            <person name="Rosenthal A."/>
            <person name="Cox E.C."/>
            <person name="Chisholm R.L."/>
            <person name="Gibbs R.A."/>
            <person name="Loomis W.F."/>
            <person name="Platzer M."/>
            <person name="Kay R.R."/>
            <person name="Williams J.G."/>
            <person name="Dear P.H."/>
            <person name="Noegel A.A."/>
            <person name="Barrell B.G."/>
            <person name="Kuspa A."/>
        </authorList>
    </citation>
    <scope>NUCLEOTIDE SEQUENCE [LARGE SCALE GENOMIC DNA]</scope>
    <source>
        <strain>AX4</strain>
    </source>
</reference>
<feature type="chain" id="PRO_0000326544" description="Probable adenosylcobalamin-dependent ribonucleoside-triphosphate reductase">
    <location>
        <begin position="1"/>
        <end position="758"/>
    </location>
</feature>
<feature type="region of interest" description="Disordered" evidence="2">
    <location>
        <begin position="233"/>
        <end position="256"/>
    </location>
</feature>
<feature type="active site" evidence="1">
    <location>
        <position position="448"/>
    </location>
</feature>
<feature type="active site" evidence="1">
    <location>
        <position position="450"/>
    </location>
</feature>
<feature type="disulfide bond" description="Redox-active" evidence="1">
    <location>
        <begin position="194"/>
        <end position="459"/>
    </location>
</feature>
<organism>
    <name type="scientific">Dictyostelium discoideum</name>
    <name type="common">Social amoeba</name>
    <dbReference type="NCBI Taxonomy" id="44689"/>
    <lineage>
        <taxon>Eukaryota</taxon>
        <taxon>Amoebozoa</taxon>
        <taxon>Evosea</taxon>
        <taxon>Eumycetozoa</taxon>
        <taxon>Dictyostelia</taxon>
        <taxon>Dictyosteliales</taxon>
        <taxon>Dictyosteliaceae</taxon>
        <taxon>Dictyostelium</taxon>
    </lineage>
</organism>